<accession>B2SMB3</accession>
<evidence type="ECO:0000255" key="1">
    <source>
        <dbReference type="HAMAP-Rule" id="MF_01849"/>
    </source>
</evidence>
<evidence type="ECO:0000255" key="2">
    <source>
        <dbReference type="PROSITE-ProRule" id="PRU01266"/>
    </source>
</evidence>
<evidence type="ECO:0000305" key="3"/>
<protein>
    <recommendedName>
        <fullName evidence="1">Dual-specificity RNA methyltransferase RlmN</fullName>
        <ecNumber evidence="1">2.1.1.192</ecNumber>
    </recommendedName>
    <alternativeName>
        <fullName evidence="1">23S rRNA (adenine(2503)-C(2))-methyltransferase</fullName>
    </alternativeName>
    <alternativeName>
        <fullName evidence="1">23S rRNA m2A2503 methyltransferase</fullName>
    </alternativeName>
    <alternativeName>
        <fullName evidence="1">Ribosomal RNA large subunit methyltransferase N</fullName>
    </alternativeName>
    <alternativeName>
        <fullName evidence="1">tRNA (adenine(37)-C(2))-methyltransferase</fullName>
    </alternativeName>
    <alternativeName>
        <fullName evidence="1">tRNA m2A37 methyltransferase</fullName>
    </alternativeName>
</protein>
<sequence length="401" mass="44981">MNEVVIPSVLQDVPVRTSEPRKQNLLDLDREGLERFFADTLGEARYRAHQVMKWIHHRYVTDFDHMTDLGKALRAKLHQHAEVLVPNVVFDKPSTDGTHKWLLAMGTDGKNAIETVYIPDKGRGTLCVSSQVGCGLNCSFCSTATQGFNRNLTTAEIIGQVWVAARHLGNVPHQQRRLTNVVMMGMGEPLMNFDNVVRAMSVMRDDLGYGLASKRVTLSTSGLVPMIDRLSTESDVSLAVSLHAANDALRETLVPLNKKYPIAELMESCARYLRGSKKRDSVTFEYTLMKGINDQPEHARQLARLMRQFDNAVQSKDAGKVNLIPFNPFPGTRYERSGETEIRAFQKILLDAQVLTIVRRTRGDDIDAACGQLKGQVMDRTRRQAEFRRTLEGQADRDAAA</sequence>
<comment type="function">
    <text evidence="1">Specifically methylates position 2 of adenine 2503 in 23S rRNA and position 2 of adenine 37 in tRNAs. m2A2503 modification seems to play a crucial role in the proofreading step occurring at the peptidyl transferase center and thus would serve to optimize ribosomal fidelity.</text>
</comment>
<comment type="catalytic activity">
    <reaction evidence="1">
        <text>adenosine(2503) in 23S rRNA + 2 reduced [2Fe-2S]-[ferredoxin] + 2 S-adenosyl-L-methionine = 2-methyladenosine(2503) in 23S rRNA + 5'-deoxyadenosine + L-methionine + 2 oxidized [2Fe-2S]-[ferredoxin] + S-adenosyl-L-homocysteine</text>
        <dbReference type="Rhea" id="RHEA:42916"/>
        <dbReference type="Rhea" id="RHEA-COMP:10000"/>
        <dbReference type="Rhea" id="RHEA-COMP:10001"/>
        <dbReference type="Rhea" id="RHEA-COMP:10152"/>
        <dbReference type="Rhea" id="RHEA-COMP:10282"/>
        <dbReference type="ChEBI" id="CHEBI:17319"/>
        <dbReference type="ChEBI" id="CHEBI:33737"/>
        <dbReference type="ChEBI" id="CHEBI:33738"/>
        <dbReference type="ChEBI" id="CHEBI:57844"/>
        <dbReference type="ChEBI" id="CHEBI:57856"/>
        <dbReference type="ChEBI" id="CHEBI:59789"/>
        <dbReference type="ChEBI" id="CHEBI:74411"/>
        <dbReference type="ChEBI" id="CHEBI:74497"/>
        <dbReference type="EC" id="2.1.1.192"/>
    </reaction>
</comment>
<comment type="catalytic activity">
    <reaction evidence="1">
        <text>adenosine(37) in tRNA + 2 reduced [2Fe-2S]-[ferredoxin] + 2 S-adenosyl-L-methionine = 2-methyladenosine(37) in tRNA + 5'-deoxyadenosine + L-methionine + 2 oxidized [2Fe-2S]-[ferredoxin] + S-adenosyl-L-homocysteine</text>
        <dbReference type="Rhea" id="RHEA:43332"/>
        <dbReference type="Rhea" id="RHEA-COMP:10000"/>
        <dbReference type="Rhea" id="RHEA-COMP:10001"/>
        <dbReference type="Rhea" id="RHEA-COMP:10162"/>
        <dbReference type="Rhea" id="RHEA-COMP:10485"/>
        <dbReference type="ChEBI" id="CHEBI:17319"/>
        <dbReference type="ChEBI" id="CHEBI:33737"/>
        <dbReference type="ChEBI" id="CHEBI:33738"/>
        <dbReference type="ChEBI" id="CHEBI:57844"/>
        <dbReference type="ChEBI" id="CHEBI:57856"/>
        <dbReference type="ChEBI" id="CHEBI:59789"/>
        <dbReference type="ChEBI" id="CHEBI:74411"/>
        <dbReference type="ChEBI" id="CHEBI:74497"/>
        <dbReference type="EC" id="2.1.1.192"/>
    </reaction>
</comment>
<comment type="cofactor">
    <cofactor evidence="1">
        <name>[4Fe-4S] cluster</name>
        <dbReference type="ChEBI" id="CHEBI:49883"/>
    </cofactor>
    <text evidence="1">Binds 1 [4Fe-4S] cluster. The cluster is coordinated with 3 cysteines and an exchangeable S-adenosyl-L-methionine.</text>
</comment>
<comment type="subcellular location">
    <subcellularLocation>
        <location evidence="1">Cytoplasm</location>
    </subcellularLocation>
</comment>
<comment type="miscellaneous">
    <text evidence="1">Reaction proceeds by a ping-pong mechanism involving intermediate methylation of a conserved cysteine residue.</text>
</comment>
<comment type="similarity">
    <text evidence="1">Belongs to the radical SAM superfamily. RlmN family.</text>
</comment>
<comment type="sequence caution" evidence="3">
    <conflict type="erroneous initiation">
        <sequence resource="EMBL-CDS" id="ACD59113"/>
    </conflict>
</comment>
<comment type="sequence caution" evidence="3">
    <conflict type="erroneous initiation">
        <sequence resource="EMBL-CDS" id="ACD59304"/>
    </conflict>
</comment>
<keyword id="KW-0004">4Fe-4S</keyword>
<keyword id="KW-0963">Cytoplasm</keyword>
<keyword id="KW-1015">Disulfide bond</keyword>
<keyword id="KW-0408">Iron</keyword>
<keyword id="KW-0411">Iron-sulfur</keyword>
<keyword id="KW-0479">Metal-binding</keyword>
<keyword id="KW-0489">Methyltransferase</keyword>
<keyword id="KW-0698">rRNA processing</keyword>
<keyword id="KW-0949">S-adenosyl-L-methionine</keyword>
<keyword id="KW-0808">Transferase</keyword>
<keyword id="KW-0819">tRNA processing</keyword>
<proteinExistence type="inferred from homology"/>
<reference key="1">
    <citation type="journal article" date="2008" name="BMC Genomics">
        <title>Genome sequence and rapid evolution of the rice pathogen Xanthomonas oryzae pv. oryzae PXO99A.</title>
        <authorList>
            <person name="Salzberg S.L."/>
            <person name="Sommer D.D."/>
            <person name="Schatz M.C."/>
            <person name="Phillippy A.M."/>
            <person name="Rabinowicz P.D."/>
            <person name="Tsuge S."/>
            <person name="Furutani A."/>
            <person name="Ochiai H."/>
            <person name="Delcher A.L."/>
            <person name="Kelley D."/>
            <person name="Madupu R."/>
            <person name="Puiu D."/>
            <person name="Radune D."/>
            <person name="Shumway M."/>
            <person name="Trapnell C."/>
            <person name="Aparna G."/>
            <person name="Jha G."/>
            <person name="Pandey A."/>
            <person name="Patil P.B."/>
            <person name="Ishihara H."/>
            <person name="Meyer D.F."/>
            <person name="Szurek B."/>
            <person name="Verdier V."/>
            <person name="Koebnik R."/>
            <person name="Dow J.M."/>
            <person name="Ryan R.P."/>
            <person name="Hirata H."/>
            <person name="Tsuyumu S."/>
            <person name="Won Lee S."/>
            <person name="Seo Y.-S."/>
            <person name="Sriariyanum M."/>
            <person name="Ronald P.C."/>
            <person name="Sonti R.V."/>
            <person name="Van Sluys M.-A."/>
            <person name="Leach J.E."/>
            <person name="White F.F."/>
            <person name="Bogdanove A.J."/>
        </authorList>
    </citation>
    <scope>NUCLEOTIDE SEQUENCE [LARGE SCALE GENOMIC DNA]</scope>
    <source>
        <strain>PXO99A</strain>
    </source>
</reference>
<name>RLMN_XANOP</name>
<dbReference type="EC" id="2.1.1.192" evidence="1"/>
<dbReference type="EMBL" id="CP000967">
    <property type="protein sequence ID" value="ACD59113.1"/>
    <property type="status" value="ALT_INIT"/>
    <property type="molecule type" value="Genomic_DNA"/>
</dbReference>
<dbReference type="EMBL" id="CP000967">
    <property type="protein sequence ID" value="ACD59304.1"/>
    <property type="status" value="ALT_INIT"/>
    <property type="molecule type" value="Genomic_DNA"/>
</dbReference>
<dbReference type="SMR" id="B2SMB3"/>
<dbReference type="KEGG" id="xop:PXO_01053"/>
<dbReference type="KEGG" id="xop:PXO_06113"/>
<dbReference type="eggNOG" id="COG0820">
    <property type="taxonomic scope" value="Bacteria"/>
</dbReference>
<dbReference type="HOGENOM" id="CLU_029101_0_0_6"/>
<dbReference type="Proteomes" id="UP000001740">
    <property type="component" value="Chromosome"/>
</dbReference>
<dbReference type="GO" id="GO:0005737">
    <property type="term" value="C:cytoplasm"/>
    <property type="evidence" value="ECO:0007669"/>
    <property type="project" value="UniProtKB-SubCell"/>
</dbReference>
<dbReference type="GO" id="GO:0051539">
    <property type="term" value="F:4 iron, 4 sulfur cluster binding"/>
    <property type="evidence" value="ECO:0007669"/>
    <property type="project" value="UniProtKB-UniRule"/>
</dbReference>
<dbReference type="GO" id="GO:0046872">
    <property type="term" value="F:metal ion binding"/>
    <property type="evidence" value="ECO:0007669"/>
    <property type="project" value="UniProtKB-KW"/>
</dbReference>
<dbReference type="GO" id="GO:0070040">
    <property type="term" value="F:rRNA (adenine(2503)-C2-)-methyltransferase activity"/>
    <property type="evidence" value="ECO:0007669"/>
    <property type="project" value="UniProtKB-UniRule"/>
</dbReference>
<dbReference type="GO" id="GO:0019843">
    <property type="term" value="F:rRNA binding"/>
    <property type="evidence" value="ECO:0007669"/>
    <property type="project" value="UniProtKB-UniRule"/>
</dbReference>
<dbReference type="GO" id="GO:0002935">
    <property type="term" value="F:tRNA (adenine(37)-C2)-methyltransferase activity"/>
    <property type="evidence" value="ECO:0007669"/>
    <property type="project" value="UniProtKB-UniRule"/>
</dbReference>
<dbReference type="GO" id="GO:0000049">
    <property type="term" value="F:tRNA binding"/>
    <property type="evidence" value="ECO:0007669"/>
    <property type="project" value="UniProtKB-UniRule"/>
</dbReference>
<dbReference type="GO" id="GO:0070475">
    <property type="term" value="P:rRNA base methylation"/>
    <property type="evidence" value="ECO:0007669"/>
    <property type="project" value="UniProtKB-UniRule"/>
</dbReference>
<dbReference type="GO" id="GO:0030488">
    <property type="term" value="P:tRNA methylation"/>
    <property type="evidence" value="ECO:0007669"/>
    <property type="project" value="UniProtKB-UniRule"/>
</dbReference>
<dbReference type="CDD" id="cd01335">
    <property type="entry name" value="Radical_SAM"/>
    <property type="match status" value="1"/>
</dbReference>
<dbReference type="FunFam" id="1.10.150.530:FF:000003">
    <property type="entry name" value="Dual-specificity RNA methyltransferase RlmN"/>
    <property type="match status" value="1"/>
</dbReference>
<dbReference type="FunFam" id="3.20.20.70:FF:000008">
    <property type="entry name" value="Dual-specificity RNA methyltransferase RlmN"/>
    <property type="match status" value="1"/>
</dbReference>
<dbReference type="Gene3D" id="1.10.150.530">
    <property type="match status" value="1"/>
</dbReference>
<dbReference type="Gene3D" id="3.20.20.70">
    <property type="entry name" value="Aldolase class I"/>
    <property type="match status" value="1"/>
</dbReference>
<dbReference type="HAMAP" id="MF_01849">
    <property type="entry name" value="RNA_methyltr_RlmN"/>
    <property type="match status" value="1"/>
</dbReference>
<dbReference type="InterPro" id="IPR013785">
    <property type="entry name" value="Aldolase_TIM"/>
</dbReference>
<dbReference type="InterPro" id="IPR040072">
    <property type="entry name" value="Methyltransferase_A"/>
</dbReference>
<dbReference type="InterPro" id="IPR048641">
    <property type="entry name" value="RlmN_N"/>
</dbReference>
<dbReference type="InterPro" id="IPR027492">
    <property type="entry name" value="RNA_MTrfase_RlmN"/>
</dbReference>
<dbReference type="InterPro" id="IPR004383">
    <property type="entry name" value="rRNA_lsu_MTrfase_RlmN/Cfr"/>
</dbReference>
<dbReference type="InterPro" id="IPR007197">
    <property type="entry name" value="rSAM"/>
</dbReference>
<dbReference type="NCBIfam" id="TIGR00048">
    <property type="entry name" value="rRNA_mod_RlmN"/>
    <property type="match status" value="1"/>
</dbReference>
<dbReference type="PANTHER" id="PTHR30544">
    <property type="entry name" value="23S RRNA METHYLTRANSFERASE"/>
    <property type="match status" value="1"/>
</dbReference>
<dbReference type="PANTHER" id="PTHR30544:SF5">
    <property type="entry name" value="RADICAL SAM CORE DOMAIN-CONTAINING PROTEIN"/>
    <property type="match status" value="1"/>
</dbReference>
<dbReference type="Pfam" id="PF04055">
    <property type="entry name" value="Radical_SAM"/>
    <property type="match status" value="1"/>
</dbReference>
<dbReference type="Pfam" id="PF21016">
    <property type="entry name" value="RlmN_N"/>
    <property type="match status" value="1"/>
</dbReference>
<dbReference type="PIRSF" id="PIRSF006004">
    <property type="entry name" value="CHP00048"/>
    <property type="match status" value="1"/>
</dbReference>
<dbReference type="SFLD" id="SFLDF00275">
    <property type="entry name" value="adenosine_C2_methyltransferase"/>
    <property type="match status" value="1"/>
</dbReference>
<dbReference type="SFLD" id="SFLDG01062">
    <property type="entry name" value="methyltransferase_(Class_A)"/>
    <property type="match status" value="1"/>
</dbReference>
<dbReference type="SUPFAM" id="SSF102114">
    <property type="entry name" value="Radical SAM enzymes"/>
    <property type="match status" value="1"/>
</dbReference>
<dbReference type="PROSITE" id="PS51918">
    <property type="entry name" value="RADICAL_SAM"/>
    <property type="match status" value="1"/>
</dbReference>
<organism>
    <name type="scientific">Xanthomonas oryzae pv. oryzae (strain PXO99A)</name>
    <dbReference type="NCBI Taxonomy" id="360094"/>
    <lineage>
        <taxon>Bacteria</taxon>
        <taxon>Pseudomonadati</taxon>
        <taxon>Pseudomonadota</taxon>
        <taxon>Gammaproteobacteria</taxon>
        <taxon>Lysobacterales</taxon>
        <taxon>Lysobacteraceae</taxon>
        <taxon>Xanthomonas</taxon>
    </lineage>
</organism>
<gene>
    <name evidence="1" type="primary">rlmN1</name>
    <name type="ordered locus">PXO_01053</name>
</gene>
<gene>
    <name evidence="1" type="primary">rlmN2</name>
    <name type="ordered locus">PXO_06113</name>
</gene>
<feature type="chain" id="PRO_0000350532" description="Dual-specificity RNA methyltransferase RlmN">
    <location>
        <begin position="1"/>
        <end position="401"/>
    </location>
</feature>
<feature type="domain" description="Radical SAM core" evidence="2">
    <location>
        <begin position="120"/>
        <end position="365"/>
    </location>
</feature>
<feature type="active site" description="Proton acceptor" evidence="1">
    <location>
        <position position="114"/>
    </location>
</feature>
<feature type="active site" description="S-methylcysteine intermediate" evidence="1">
    <location>
        <position position="370"/>
    </location>
</feature>
<feature type="binding site" evidence="1">
    <location>
        <position position="134"/>
    </location>
    <ligand>
        <name>[4Fe-4S] cluster</name>
        <dbReference type="ChEBI" id="CHEBI:49883"/>
        <note>4Fe-4S-S-AdoMet</note>
    </ligand>
</feature>
<feature type="binding site" evidence="1">
    <location>
        <position position="138"/>
    </location>
    <ligand>
        <name>[4Fe-4S] cluster</name>
        <dbReference type="ChEBI" id="CHEBI:49883"/>
        <note>4Fe-4S-S-AdoMet</note>
    </ligand>
</feature>
<feature type="binding site" evidence="1">
    <location>
        <position position="141"/>
    </location>
    <ligand>
        <name>[4Fe-4S] cluster</name>
        <dbReference type="ChEBI" id="CHEBI:49883"/>
        <note>4Fe-4S-S-AdoMet</note>
    </ligand>
</feature>
<feature type="binding site" evidence="1">
    <location>
        <begin position="187"/>
        <end position="188"/>
    </location>
    <ligand>
        <name>S-adenosyl-L-methionine</name>
        <dbReference type="ChEBI" id="CHEBI:59789"/>
    </ligand>
</feature>
<feature type="binding site" evidence="1">
    <location>
        <position position="219"/>
    </location>
    <ligand>
        <name>S-adenosyl-L-methionine</name>
        <dbReference type="ChEBI" id="CHEBI:59789"/>
    </ligand>
</feature>
<feature type="binding site" evidence="1">
    <location>
        <begin position="241"/>
        <end position="243"/>
    </location>
    <ligand>
        <name>S-adenosyl-L-methionine</name>
        <dbReference type="ChEBI" id="CHEBI:59789"/>
    </ligand>
</feature>
<feature type="binding site" evidence="1">
    <location>
        <position position="327"/>
    </location>
    <ligand>
        <name>S-adenosyl-L-methionine</name>
        <dbReference type="ChEBI" id="CHEBI:59789"/>
    </ligand>
</feature>
<feature type="disulfide bond" description="(transient)" evidence="1">
    <location>
        <begin position="127"/>
        <end position="370"/>
    </location>
</feature>